<comment type="function">
    <text evidence="1 4 6 8 9 13">Inactive protein kinase which acts as a regulator of the integrated stress response (ISR), a process for adaptation to various stress (PubMed:15775988, PubMed:15781252). Inhibits the transcriptional activity of DDIT3/CHOP and is involved in DDIT3/CHOP-dependent cell death during ER stress (PubMed:15775988, PubMed:15781252). May play a role in programmed neuronal cell death but does not appear to affect non-neuronal cells (PubMed:15775988, PubMed:15781252). Acts as a negative feedback regulator of the ATF4-dependent transcription during the ISR: while TRIB3 expression is promoted by ATF4, TRIB3 protein interacts with ATF4 and inhibits ATF4 transcription activity (By similarity). Disrupts insulin signaling by binding directly to Akt kinases and blocking their activation (By similarity). May bind directly to and mask the 'Thr-308' phosphorylation site in AKT1 (By similarity). Interacts with the NF-kappa-B transactivator p65 RELA and inhibits its phosphorylation and thus its transcriptional activation activity (PubMed:12736262). Interacts with MAPK kinases and regulates activation of MAP kinases (PubMed:15299019). Can inhibit APOBEC3A editing of nuclear DNA (PubMed:22977230).</text>
</comment>
<comment type="subunit">
    <text evidence="4 5 6 8 12 13">Interacts with AKT1, AKT2, MAP2K1 and MAP2K7 (PubMed:15299019). Interacts with ATF4 (PubMed:12743605). Interacts with DDIT3/CHOP and inhibits its interaction with EP300/P300 (PubMed:15775988, PubMed:17872950). Interacts with APOBEC3C (PubMed:22977230). Interacts (via N-terminus) with APOBEC3A (PubMed:22977230). Interacts with RELA (PubMed:12736262).</text>
</comment>
<comment type="interaction">
    <interactant intactId="EBI-492476">
        <id>Q96RU7</id>
    </interactant>
    <interactant intactId="EBI-357530">
        <id>Q9ULX6</id>
        <label>AKAP8L</label>
    </interactant>
    <organismsDiffer>false</organismsDiffer>
    <experiments>3</experiments>
</comment>
<comment type="interaction">
    <interactant intactId="EBI-492476">
        <id>Q96RU7</id>
    </interactant>
    <interactant intactId="EBI-1044593">
        <id>Q9NRW3</id>
        <label>APOBEC3C</label>
    </interactant>
    <organismsDiffer>false</organismsDiffer>
    <experiments>7</experiments>
</comment>
<comment type="interaction">
    <interactant intactId="EBI-492476">
        <id>Q96RU7</id>
    </interactant>
    <interactant intactId="EBI-742909">
        <id>Q9H6L4</id>
        <label>ARMC7</label>
    </interactant>
    <organismsDiffer>false</organismsDiffer>
    <experiments>3</experiments>
</comment>
<comment type="interaction">
    <interactant intactId="EBI-492476">
        <id>Q96RU7</id>
    </interactant>
    <interactant intactId="EBI-492498">
        <id>P18848</id>
        <label>ATF4</label>
    </interactant>
    <organismsDiffer>false</organismsDiffer>
    <experiments>16</experiments>
</comment>
<comment type="interaction">
    <interactant intactId="EBI-492476">
        <id>Q96RU7</id>
    </interactant>
    <interactant intactId="EBI-747185">
        <id>O95817</id>
        <label>BAG3</label>
    </interactant>
    <organismsDiffer>false</organismsDiffer>
    <experiments>3</experiments>
</comment>
<comment type="interaction">
    <interactant intactId="EBI-492476">
        <id>Q96RU7</id>
    </interactant>
    <interactant intactId="EBI-765407">
        <id>P41182</id>
        <label>BCL6</label>
    </interactant>
    <organismsDiffer>false</organismsDiffer>
    <experiments>4</experiments>
</comment>
<comment type="interaction">
    <interactant intactId="EBI-492476">
        <id>Q96RU7</id>
    </interactant>
    <interactant intactId="EBI-10229433">
        <id>Q13515</id>
        <label>BFSP2</label>
    </interactant>
    <organismsDiffer>false</organismsDiffer>
    <experiments>3</experiments>
</comment>
<comment type="interaction">
    <interactant intactId="EBI-492476">
        <id>Q96RU7</id>
    </interactant>
    <interactant intactId="EBI-10226774">
        <id>Q0VAL7</id>
        <label>C21orf58</label>
    </interactant>
    <organismsDiffer>false</organismsDiffer>
    <experiments>3</experiments>
</comment>
<comment type="interaction">
    <interactant intactId="EBI-492476">
        <id>Q96RU7</id>
    </interactant>
    <interactant intactId="EBI-7317823">
        <id>Q6P5X5</id>
        <label>C22orf39</label>
    </interactant>
    <organismsDiffer>false</organismsDiffer>
    <experiments>3</experiments>
</comment>
<comment type="interaction">
    <interactant intactId="EBI-492476">
        <id>Q96RU7</id>
    </interactant>
    <interactant intactId="EBI-712912">
        <id>Q9HC52</id>
        <label>CBX8</label>
    </interactant>
    <organismsDiffer>false</organismsDiffer>
    <experiments>3</experiments>
</comment>
<comment type="interaction">
    <interactant intactId="EBI-492476">
        <id>Q96RU7</id>
    </interactant>
    <interactant intactId="EBI-1020839">
        <id>Q13111</id>
        <label>CHAF1A</label>
    </interactant>
    <organismsDiffer>false</organismsDiffer>
    <experiments>5</experiments>
</comment>
<comment type="interaction">
    <interactant intactId="EBI-492476">
        <id>Q96RU7</id>
    </interactant>
    <interactant intactId="EBI-11980535">
        <id>P51800-3</id>
        <label>CLCNKA</label>
    </interactant>
    <organismsDiffer>false</organismsDiffer>
    <experiments>3</experiments>
</comment>
<comment type="interaction">
    <interactant intactId="EBI-492476">
        <id>Q96RU7</id>
    </interactant>
    <interactant intactId="EBI-1188472">
        <id>P78358</id>
        <label>CTAG1B</label>
    </interactant>
    <organismsDiffer>false</organismsDiffer>
    <experiments>3</experiments>
</comment>
<comment type="interaction">
    <interactant intactId="EBI-492476">
        <id>Q96RU7</id>
    </interactant>
    <interactant intactId="EBI-10976677">
        <id>G5E9A7</id>
        <label>DMWD</label>
    </interactant>
    <organismsDiffer>false</organismsDiffer>
    <experiments>3</experiments>
</comment>
<comment type="interaction">
    <interactant intactId="EBI-492476">
        <id>Q96RU7</id>
    </interactant>
    <interactant intactId="EBI-12082590">
        <id>Q6W0C5</id>
        <label>DPPA3</label>
    </interactant>
    <organismsDiffer>false</organismsDiffer>
    <experiments>3</experiments>
</comment>
<comment type="interaction">
    <interactant intactId="EBI-492476">
        <id>Q96RU7</id>
    </interactant>
    <interactant intactId="EBI-740376">
        <id>Q86UW9</id>
        <label>DTX2</label>
    </interactant>
    <organismsDiffer>false</organismsDiffer>
    <experiments>3</experiments>
</comment>
<comment type="interaction">
    <interactant intactId="EBI-492476">
        <id>Q96RU7</id>
    </interactant>
    <interactant intactId="EBI-743414">
        <id>O95967</id>
        <label>EFEMP2</label>
    </interactant>
    <organismsDiffer>false</organismsDiffer>
    <experiments>3</experiments>
</comment>
<comment type="interaction">
    <interactant intactId="EBI-492476">
        <id>Q96RU7</id>
    </interactant>
    <interactant intactId="EBI-10182490">
        <id>O15197-2</id>
        <label>EPHB6</label>
    </interactant>
    <organismsDiffer>false</organismsDiffer>
    <experiments>3</experiments>
</comment>
<comment type="interaction">
    <interactant intactId="EBI-492476">
        <id>Q96RU7</id>
    </interactant>
    <interactant intactId="EBI-371876">
        <id>Q9NQT4</id>
        <label>EXOSC5</label>
    </interactant>
    <organismsDiffer>false</organismsDiffer>
    <experiments>3</experiments>
</comment>
<comment type="interaction">
    <interactant intactId="EBI-492476">
        <id>Q96RU7</id>
    </interactant>
    <interactant intactId="EBI-12013806">
        <id>Q6NZ36-4</id>
        <label>FAAP20</label>
    </interactant>
    <organismsDiffer>false</organismsDiffer>
    <experiments>3</experiments>
</comment>
<comment type="interaction">
    <interactant intactId="EBI-492476">
        <id>Q96RU7</id>
    </interactant>
    <interactant intactId="EBI-719941">
        <id>Q3B820</id>
        <label>FAM161A</label>
    </interactant>
    <organismsDiffer>false</organismsDiffer>
    <experiments>3</experiments>
</comment>
<comment type="interaction">
    <interactant intactId="EBI-492476">
        <id>Q96RU7</id>
    </interactant>
    <interactant intactId="EBI-6658203">
        <id>Q86YD7</id>
        <label>FAM90A1</label>
    </interactant>
    <organismsDiffer>false</organismsDiffer>
    <experiments>3</experiments>
</comment>
<comment type="interaction">
    <interactant intactId="EBI-492476">
        <id>Q96RU7</id>
    </interactant>
    <interactant intactId="EBI-12232117">
        <id>Q8NEA6-2</id>
        <label>GLIS3</label>
    </interactant>
    <organismsDiffer>false</organismsDiffer>
    <experiments>3</experiments>
</comment>
<comment type="interaction">
    <interactant intactId="EBI-492476">
        <id>Q96RU7</id>
    </interactant>
    <interactant intactId="EBI-11959863">
        <id>Q9NWQ4-1</id>
        <label>GPATCH2L</label>
    </interactant>
    <organismsDiffer>false</organismsDiffer>
    <experiments>3</experiments>
</comment>
<comment type="interaction">
    <interactant intactId="EBI-492476">
        <id>Q96RU7</id>
    </interactant>
    <interactant intactId="EBI-401755">
        <id>P62993</id>
        <label>GRB2</label>
    </interactant>
    <organismsDiffer>false</organismsDiffer>
    <experiments>3</experiments>
</comment>
<comment type="interaction">
    <interactant intactId="EBI-492476">
        <id>Q96RU7</id>
    </interactant>
    <interactant intactId="EBI-2339359">
        <id>O14929</id>
        <label>HAT1</label>
    </interactant>
    <organismsDiffer>false</organismsDiffer>
    <experiments>3</experiments>
</comment>
<comment type="interaction">
    <interactant intactId="EBI-492476">
        <id>Q96RU7</id>
    </interactant>
    <interactant intactId="EBI-11953488">
        <id>P56524-2</id>
        <label>HDAC4</label>
    </interactant>
    <organismsDiffer>false</organismsDiffer>
    <experiments>3</experiments>
</comment>
<comment type="interaction">
    <interactant intactId="EBI-492476">
        <id>Q96RU7</id>
    </interactant>
    <interactant intactId="EBI-352986">
        <id>P52597</id>
        <label>HNRNPF</label>
    </interactant>
    <organismsDiffer>false</organismsDiffer>
    <experiments>3</experiments>
</comment>
<comment type="interaction">
    <interactant intactId="EBI-492476">
        <id>Q96RU7</id>
    </interactant>
    <interactant intactId="EBI-3893317">
        <id>P09067</id>
        <label>HOXB5</label>
    </interactant>
    <organismsDiffer>false</organismsDiffer>
    <experiments>3</experiments>
</comment>
<comment type="interaction">
    <interactant intactId="EBI-492476">
        <id>Q96RU7</id>
    </interactant>
    <interactant intactId="EBI-1752118">
        <id>P31273</id>
        <label>HOXC8</label>
    </interactant>
    <organismsDiffer>false</organismsDiffer>
    <experiments>3</experiments>
</comment>
<comment type="interaction">
    <interactant intactId="EBI-492476">
        <id>Q96RU7</id>
    </interactant>
    <interactant intactId="EBI-17178971">
        <id>Q14005-2</id>
        <label>IL16</label>
    </interactant>
    <organismsDiffer>false</organismsDiffer>
    <experiments>3</experiments>
</comment>
<comment type="interaction">
    <interactant intactId="EBI-492476">
        <id>Q96RU7</id>
    </interactant>
    <interactant intactId="EBI-6509505">
        <id>Q0VD86</id>
        <label>INCA1</label>
    </interactant>
    <organismsDiffer>false</organismsDiffer>
    <experiments>3</experiments>
</comment>
<comment type="interaction">
    <interactant intactId="EBI-492476">
        <id>Q96RU7</id>
    </interactant>
    <interactant intactId="EBI-715611">
        <id>Q9C086</id>
        <label>INO80B</label>
    </interactant>
    <organismsDiffer>false</organismsDiffer>
    <experiments>3</experiments>
</comment>
<comment type="interaction">
    <interactant intactId="EBI-492476">
        <id>Q96RU7</id>
    </interactant>
    <interactant intactId="EBI-12100506">
        <id>P78412</id>
        <label>IRX6</label>
    </interactant>
    <organismsDiffer>false</organismsDiffer>
    <experiments>3</experiments>
</comment>
<comment type="interaction">
    <interactant intactId="EBI-492476">
        <id>Q96RU7</id>
    </interactant>
    <interactant intactId="EBI-2556193">
        <id>Q63ZY3</id>
        <label>KANK2</label>
    </interactant>
    <organismsDiffer>false</organismsDiffer>
    <experiments>5</experiments>
</comment>
<comment type="interaction">
    <interactant intactId="EBI-492476">
        <id>Q96RU7</id>
    </interactant>
    <interactant intactId="EBI-6426443">
        <id>Q2WGJ6</id>
        <label>KLHL38</label>
    </interactant>
    <organismsDiffer>false</organismsDiffer>
    <experiments>3</experiments>
</comment>
<comment type="interaction">
    <interactant intactId="EBI-492476">
        <id>Q96RU7</id>
    </interactant>
    <interactant intactId="EBI-12084444">
        <id>Q7Z3Y9</id>
        <label>KRT26</label>
    </interactant>
    <organismsDiffer>false</organismsDiffer>
    <experiments>3</experiments>
</comment>
<comment type="interaction">
    <interactant intactId="EBI-492476">
        <id>Q96RU7</id>
    </interactant>
    <interactant intactId="EBI-726510">
        <id>Q96BZ8</id>
        <label>LENG1</label>
    </interactant>
    <organismsDiffer>false</organismsDiffer>
    <experiments>3</experiments>
</comment>
<comment type="interaction">
    <interactant intactId="EBI-492476">
        <id>Q96RU7</id>
    </interactant>
    <interactant intactId="EBI-11959475">
        <id>P25791-3</id>
        <label>LMO2</label>
    </interactant>
    <organismsDiffer>false</organismsDiffer>
    <experiments>3</experiments>
</comment>
<comment type="interaction">
    <interactant intactId="EBI-492476">
        <id>Q96RU7</id>
    </interactant>
    <interactant intactId="EBI-11742507">
        <id>Q8TAP4-4</id>
        <label>LMO3</label>
    </interactant>
    <organismsDiffer>false</organismsDiffer>
    <experiments>3</experiments>
</comment>
<comment type="interaction">
    <interactant intactId="EBI-492476">
        <id>Q96RU7</id>
    </interactant>
    <interactant intactId="EBI-724076">
        <id>Q99750</id>
        <label>MDFI</label>
    </interactant>
    <organismsDiffer>false</organismsDiffer>
    <experiments>3</experiments>
</comment>
<comment type="interaction">
    <interactant intactId="EBI-492476">
        <id>Q96RU7</id>
    </interactant>
    <interactant intactId="EBI-2555085">
        <id>Q8IVT2</id>
        <label>MISP</label>
    </interactant>
    <organismsDiffer>false</organismsDiffer>
    <experiments>3</experiments>
</comment>
<comment type="interaction">
    <interactant intactId="EBI-492476">
        <id>Q96RU7</id>
    </interactant>
    <interactant intactId="EBI-536879">
        <id>O43482</id>
        <label>OIP5</label>
    </interactant>
    <organismsDiffer>false</organismsDiffer>
    <experiments>3</experiments>
</comment>
<comment type="interaction">
    <interactant intactId="EBI-492476">
        <id>Q96RU7</id>
    </interactant>
    <interactant intactId="EBI-1042511">
        <id>Q9UM07</id>
        <label>PADI4</label>
    </interactant>
    <organismsDiffer>false</organismsDiffer>
    <experiments>3</experiments>
</comment>
<comment type="interaction">
    <interactant intactId="EBI-492476">
        <id>Q96RU7</id>
    </interactant>
    <interactant intactId="EBI-295391">
        <id>Q9BYG5</id>
        <label>PARD6B</label>
    </interactant>
    <organismsDiffer>false</organismsDiffer>
    <experiments>3</experiments>
</comment>
<comment type="interaction">
    <interactant intactId="EBI-492476">
        <id>Q96RU7</id>
    </interactant>
    <interactant intactId="EBI-11956269">
        <id>Q92824-2</id>
        <label>PCSK5</label>
    </interactant>
    <organismsDiffer>false</organismsDiffer>
    <experiments>3</experiments>
</comment>
<comment type="interaction">
    <interactant intactId="EBI-492476">
        <id>Q96RU7</id>
    </interactant>
    <interactant intactId="EBI-12138495">
        <id>Q99697-2</id>
        <label>PITX2</label>
    </interactant>
    <organismsDiffer>false</organismsDiffer>
    <experiments>3</experiments>
</comment>
<comment type="interaction">
    <interactant intactId="EBI-492476">
        <id>Q96RU7</id>
    </interactant>
    <interactant intactId="EBI-2692890">
        <id>Q96KN3</id>
        <label>PKNOX2</label>
    </interactant>
    <organismsDiffer>false</organismsDiffer>
    <experiments>3</experiments>
</comment>
<comment type="interaction">
    <interactant intactId="EBI-492476">
        <id>Q96RU7</id>
    </interactant>
    <interactant intactId="EBI-308500">
        <id>Q5T8A7</id>
        <label>PPP1R26</label>
    </interactant>
    <organismsDiffer>false</organismsDiffer>
    <experiments>3</experiments>
</comment>
<comment type="interaction">
    <interactant intactId="EBI-492476">
        <id>Q96RU7</id>
    </interactant>
    <interactant intactId="EBI-1053424">
        <id>O43741</id>
        <label>PRKAB2</label>
    </interactant>
    <organismsDiffer>false</organismsDiffer>
    <experiments>3</experiments>
</comment>
<comment type="interaction">
    <interactant intactId="EBI-492476">
        <id>Q96RU7</id>
    </interactant>
    <interactant intactId="EBI-351098">
        <id>O14744</id>
        <label>PRMT5</label>
    </interactant>
    <organismsDiffer>false</organismsDiffer>
    <experiments>2</experiments>
</comment>
<comment type="interaction">
    <interactant intactId="EBI-492476">
        <id>Q96RU7</id>
    </interactant>
    <interactant intactId="EBI-11998870">
        <id>A6NJB7-2</id>
        <label>PRR19</label>
    </interactant>
    <organismsDiffer>false</organismsDiffer>
    <experiments>3</experiments>
</comment>
<comment type="interaction">
    <interactant intactId="EBI-492476">
        <id>Q96RU7</id>
    </interactant>
    <interactant intactId="EBI-1050213">
        <id>Q96KN7</id>
        <label>RPGRIP1</label>
    </interactant>
    <organismsDiffer>false</organismsDiffer>
    <experiments>3</experiments>
</comment>
<comment type="interaction">
    <interactant intactId="EBI-492476">
        <id>Q96RU7</id>
    </interactant>
    <interactant intactId="EBI-11525164">
        <id>Q96KN7-4</id>
        <label>RPGRIP1</label>
    </interactant>
    <organismsDiffer>false</organismsDiffer>
    <experiments>3</experiments>
</comment>
<comment type="interaction">
    <interactant intactId="EBI-492476">
        <id>Q96RU7</id>
    </interactant>
    <interactant intactId="EBI-14067109">
        <id>Q96NU1</id>
        <label>SAMD11</label>
    </interactant>
    <organismsDiffer>false</organismsDiffer>
    <experiments>3</experiments>
</comment>
<comment type="interaction">
    <interactant intactId="EBI-492476">
        <id>Q96RU7</id>
    </interactant>
    <interactant intactId="EBI-3957636">
        <id>Q8IYX7</id>
        <label>SAXO1</label>
    </interactant>
    <organismsDiffer>false</organismsDiffer>
    <experiments>3</experiments>
</comment>
<comment type="interaction">
    <interactant intactId="EBI-492476">
        <id>Q96RU7</id>
    </interactant>
    <interactant intactId="EBI-12000762">
        <id>Q7Z5V6-2</id>
        <label>SAXO4</label>
    </interactant>
    <organismsDiffer>false</organismsDiffer>
    <experiments>3</experiments>
</comment>
<comment type="interaction">
    <interactant intactId="EBI-492476">
        <id>Q96RU7</id>
    </interactant>
    <interactant intactId="EBI-748391">
        <id>Q9BWG6</id>
        <label>SCNM1</label>
    </interactant>
    <organismsDiffer>false</organismsDiffer>
    <experiments>3</experiments>
</comment>
<comment type="interaction">
    <interactant intactId="EBI-492476">
        <id>Q96RU7</id>
    </interactant>
    <interactant intactId="EBI-11955083">
        <id>Q9NUL5-4</id>
        <label>SHFL</label>
    </interactant>
    <organismsDiffer>false</organismsDiffer>
    <experiments>3</experiments>
</comment>
<comment type="interaction">
    <interactant intactId="EBI-492476">
        <id>Q96RU7</id>
    </interactant>
    <interactant intactId="EBI-766589">
        <id>P09234</id>
        <label>SNRPC</label>
    </interactant>
    <organismsDiffer>false</organismsDiffer>
    <experiments>3</experiments>
</comment>
<comment type="interaction">
    <interactant intactId="EBI-492476">
        <id>Q96RU7</id>
    </interactant>
    <interactant intactId="EBI-11959123">
        <id>Q99932-2</id>
        <label>SPAG8</label>
    </interactant>
    <organismsDiffer>false</organismsDiffer>
    <experiments>3</experiments>
</comment>
<comment type="interaction">
    <interactant intactId="EBI-492476">
        <id>Q96RU7</id>
    </interactant>
    <interactant intactId="EBI-742688">
        <id>Q9NZD8</id>
        <label>SPG21</label>
    </interactant>
    <organismsDiffer>false</organismsDiffer>
    <experiments>3</experiments>
</comment>
<comment type="interaction">
    <interactant intactId="EBI-492476">
        <id>Q96RU7</id>
    </interactant>
    <interactant intactId="EBI-5235340">
        <id>Q7Z699</id>
        <label>SPRED1</label>
    </interactant>
    <organismsDiffer>false</organismsDiffer>
    <experiments>4</experiments>
</comment>
<comment type="interaction">
    <interactant intactId="EBI-492476">
        <id>Q96RU7</id>
    </interactant>
    <interactant intactId="EBI-3921347">
        <id>P51687</id>
        <label>SUOX</label>
    </interactant>
    <organismsDiffer>false</organismsDiffer>
    <experiments>3</experiments>
</comment>
<comment type="interaction">
    <interactant intactId="EBI-492476">
        <id>Q96RU7</id>
    </interactant>
    <interactant intactId="EBI-7413767">
        <id>Q9Y242</id>
        <label>TCF19</label>
    </interactant>
    <organismsDiffer>false</organismsDiffer>
    <experiments>3</experiments>
</comment>
<comment type="interaction">
    <interactant intactId="EBI-492476">
        <id>Q96RU7</id>
    </interactant>
    <interactant intactId="EBI-8644516">
        <id>Q9BXF9</id>
        <label>TEKT3</label>
    </interactant>
    <organismsDiffer>false</organismsDiffer>
    <experiments>3</experiments>
</comment>
<comment type="interaction">
    <interactant intactId="EBI-492476">
        <id>Q96RU7</id>
    </interactant>
    <interactant intactId="EBI-750487">
        <id>Q8WW24</id>
        <label>TEKT4</label>
    </interactant>
    <organismsDiffer>false</organismsDiffer>
    <experiments>5</experiments>
</comment>
<comment type="interaction">
    <interactant intactId="EBI-492476">
        <id>Q96RU7</id>
    </interactant>
    <interactant intactId="EBI-11741437">
        <id>Q08117-2</id>
        <label>TLE5</label>
    </interactant>
    <organismsDiffer>false</organismsDiffer>
    <experiments>3</experiments>
</comment>
<comment type="interaction">
    <interactant intactId="EBI-492476">
        <id>Q96RU7</id>
    </interactant>
    <interactant intactId="EBI-9090990">
        <id>Q5W5X9-3</id>
        <label>TTC23</label>
    </interactant>
    <organismsDiffer>false</organismsDiffer>
    <experiments>3</experiments>
</comment>
<comment type="interaction">
    <interactant intactId="EBI-492476">
        <id>Q96RU7</id>
    </interactant>
    <interactant intactId="EBI-12867288">
        <id>Q8WUN7</id>
        <label>UBTD2</label>
    </interactant>
    <organismsDiffer>false</organismsDiffer>
    <experiments>3</experiments>
</comment>
<comment type="interaction">
    <interactant intactId="EBI-492476">
        <id>Q96RU7</id>
    </interactant>
    <interactant intactId="EBI-2511991">
        <id>Q9Y2K6</id>
        <label>USP20</label>
    </interactant>
    <organismsDiffer>false</organismsDiffer>
    <experiments>3</experiments>
</comment>
<comment type="interaction">
    <interactant intactId="EBI-492476">
        <id>Q96RU7</id>
    </interactant>
    <interactant intactId="EBI-5457544">
        <id>Q9BRU9</id>
        <label>UTP23</label>
    </interactant>
    <organismsDiffer>false</organismsDiffer>
    <experiments>3</experiments>
</comment>
<comment type="interaction">
    <interactant intactId="EBI-492476">
        <id>Q96RU7</id>
    </interactant>
    <interactant intactId="EBI-740727">
        <id>Q8TAU3</id>
        <label>ZNF417</label>
    </interactant>
    <organismsDiffer>false</organismsDiffer>
    <experiments>3</experiments>
</comment>
<comment type="interaction">
    <interactant intactId="EBI-492476">
        <id>Q96RU7</id>
    </interactant>
    <interactant intactId="EBI-6427977">
        <id>Q96SQ5</id>
        <label>ZNF587</label>
    </interactant>
    <organismsDiffer>false</organismsDiffer>
    <experiments>3</experiments>
</comment>
<comment type="subcellular location">
    <subcellularLocation>
        <location evidence="13">Nucleus</location>
    </subcellularLocation>
</comment>
<comment type="tissue specificity">
    <text evidence="4 5 6">Highest expression in liver, pancreas, peripheral blood leukocytes and bone marrow. Also highly expressed in a number of primary lung, colon and breast tumors. Expressed in spleen, thymus, and prostate and is undetectable in other examined tissues, including testis, ovary, small intestine, colon, leukocyte, heart, brain, placenta, lung, skeletal muscle, and kidney.</text>
</comment>
<comment type="induction">
    <text evidence="4 5 8 10">By hypoxia, TNF, and by nutrient starvation. Expression is PI 3-kinase and/or NF-kappa-B-dependent. Induced by ER stress via ATF4-DDIT3/CHOP pathway and can down-regulate its own induction by repression of ATF4-DDIT3/CHOP functions.</text>
</comment>
<comment type="domain">
    <text>The protein kinase domain is predicted to be catalytically inactive.</text>
</comment>
<comment type="similarity">
    <text evidence="14">Belongs to the protein kinase superfamily. CAMK Ser/Thr protein kinase family. Tribbles subfamily.</text>
</comment>
<comment type="caution">
    <text evidence="14">The role of this protein in Akt activation has been demonstrated by Du et al (PubMed:12791994) for the mouse ortholog but Iynedjian (PubMed:15469416) has not been able to reproduce the result in rat hepatocytes.</text>
</comment>
<reference key="1">
    <citation type="journal article" date="2003" name="Oncogene">
        <title>SKIP3, a novel Drosophila tribbles ortholog, is overexpressed in human tumors and is regulated by hypoxia.</title>
        <authorList>
            <person name="Bowers A.J."/>
            <person name="Scully S."/>
            <person name="Boylan J.F."/>
        </authorList>
    </citation>
    <scope>NUCLEOTIDE SEQUENCE [MRNA]</scope>
    <scope>TISSUE SPECIFICITY</scope>
    <scope>INDUCTION</scope>
    <scope>INTERACTION WITH ATF4</scope>
</reference>
<reference key="2">
    <citation type="journal article" date="2003" name="J. Biol. Chem.">
        <title>SINK is a p65-interacting negative regulator of NF-kappaB-dependent transcription.</title>
        <authorList>
            <person name="Wu M."/>
            <person name="Xu L.G."/>
            <person name="Zhai Z."/>
            <person name="Shu H.B."/>
        </authorList>
    </citation>
    <scope>NUCLEOTIDE SEQUENCE [MRNA]</scope>
    <scope>FUNCTION</scope>
    <scope>TISSUE SPECIFICITY</scope>
    <scope>INDUCTION</scope>
    <scope>INTERACTION WITH RELA</scope>
</reference>
<reference key="3">
    <citation type="journal article" date="2004" name="J. Biol. Chem.">
        <title>Human tribbles, a protein family controlling mitogen-activated protein kinase cascades.</title>
        <authorList>
            <person name="Kiss-Toth E."/>
            <person name="Bagstaff S.M."/>
            <person name="Sung H.Y."/>
            <person name="Jozsa V."/>
            <person name="Dempsey C."/>
            <person name="Caunt J.C."/>
            <person name="Oxley K.M."/>
            <person name="Wyllie D.H."/>
            <person name="Polgar T."/>
            <person name="Harte M."/>
            <person name="O'Neill L.A.J."/>
            <person name="Qwarnstrom E.E."/>
            <person name="Dower S.K."/>
        </authorList>
    </citation>
    <scope>NUCLEOTIDE SEQUENCE [MRNA]</scope>
    <scope>FUNCTION</scope>
    <scope>TISSUE SPECIFICITY</scope>
    <scope>INTERACTION WITH MAP2K1 AND MAP2K7</scope>
</reference>
<reference key="4">
    <citation type="journal article" date="2005" name="Biochem. Biophys. Res. Commun.">
        <title>Characterization of human NIPK (TRB3, SKIP3) gene activation in stressful conditions.</title>
        <authorList>
            <person name="Ord D."/>
            <person name="Ord T."/>
        </authorList>
    </citation>
    <scope>NUCLEOTIDE SEQUENCE [MRNA]</scope>
    <scope>FUNCTION</scope>
</reference>
<reference key="5">
    <citation type="submission" date="2003-03" db="EMBL/GenBank/DDBJ databases">
        <authorList>
            <person name="Shan Y.X."/>
            <person name="Yu L."/>
        </authorList>
    </citation>
    <scope>NUCLEOTIDE SEQUENCE [MRNA]</scope>
</reference>
<reference key="6">
    <citation type="journal article" date="2004" name="Nat. Genet.">
        <title>Complete sequencing and characterization of 21,243 full-length human cDNAs.</title>
        <authorList>
            <person name="Ota T."/>
            <person name="Suzuki Y."/>
            <person name="Nishikawa T."/>
            <person name="Otsuki T."/>
            <person name="Sugiyama T."/>
            <person name="Irie R."/>
            <person name="Wakamatsu A."/>
            <person name="Hayashi K."/>
            <person name="Sato H."/>
            <person name="Nagai K."/>
            <person name="Kimura K."/>
            <person name="Makita H."/>
            <person name="Sekine M."/>
            <person name="Obayashi M."/>
            <person name="Nishi T."/>
            <person name="Shibahara T."/>
            <person name="Tanaka T."/>
            <person name="Ishii S."/>
            <person name="Yamamoto J."/>
            <person name="Saito K."/>
            <person name="Kawai Y."/>
            <person name="Isono Y."/>
            <person name="Nakamura Y."/>
            <person name="Nagahari K."/>
            <person name="Murakami K."/>
            <person name="Yasuda T."/>
            <person name="Iwayanagi T."/>
            <person name="Wagatsuma M."/>
            <person name="Shiratori A."/>
            <person name="Sudo H."/>
            <person name="Hosoiri T."/>
            <person name="Kaku Y."/>
            <person name="Kodaira H."/>
            <person name="Kondo H."/>
            <person name="Sugawara M."/>
            <person name="Takahashi M."/>
            <person name="Kanda K."/>
            <person name="Yokoi T."/>
            <person name="Furuya T."/>
            <person name="Kikkawa E."/>
            <person name="Omura Y."/>
            <person name="Abe K."/>
            <person name="Kamihara K."/>
            <person name="Katsuta N."/>
            <person name="Sato K."/>
            <person name="Tanikawa M."/>
            <person name="Yamazaki M."/>
            <person name="Ninomiya K."/>
            <person name="Ishibashi T."/>
            <person name="Yamashita H."/>
            <person name="Murakawa K."/>
            <person name="Fujimori K."/>
            <person name="Tanai H."/>
            <person name="Kimata M."/>
            <person name="Watanabe M."/>
            <person name="Hiraoka S."/>
            <person name="Chiba Y."/>
            <person name="Ishida S."/>
            <person name="Ono Y."/>
            <person name="Takiguchi S."/>
            <person name="Watanabe S."/>
            <person name="Yosida M."/>
            <person name="Hotuta T."/>
            <person name="Kusano J."/>
            <person name="Kanehori K."/>
            <person name="Takahashi-Fujii A."/>
            <person name="Hara H."/>
            <person name="Tanase T.-O."/>
            <person name="Nomura Y."/>
            <person name="Togiya S."/>
            <person name="Komai F."/>
            <person name="Hara R."/>
            <person name="Takeuchi K."/>
            <person name="Arita M."/>
            <person name="Imose N."/>
            <person name="Musashino K."/>
            <person name="Yuuki H."/>
            <person name="Oshima A."/>
            <person name="Sasaki N."/>
            <person name="Aotsuka S."/>
            <person name="Yoshikawa Y."/>
            <person name="Matsunawa H."/>
            <person name="Ichihara T."/>
            <person name="Shiohata N."/>
            <person name="Sano S."/>
            <person name="Moriya S."/>
            <person name="Momiyama H."/>
            <person name="Satoh N."/>
            <person name="Takami S."/>
            <person name="Terashima Y."/>
            <person name="Suzuki O."/>
            <person name="Nakagawa S."/>
            <person name="Senoh A."/>
            <person name="Mizoguchi H."/>
            <person name="Goto Y."/>
            <person name="Shimizu F."/>
            <person name="Wakebe H."/>
            <person name="Hishigaki H."/>
            <person name="Watanabe T."/>
            <person name="Sugiyama A."/>
            <person name="Takemoto M."/>
            <person name="Kawakami B."/>
            <person name="Yamazaki M."/>
            <person name="Watanabe K."/>
            <person name="Kumagai A."/>
            <person name="Itakura S."/>
            <person name="Fukuzumi Y."/>
            <person name="Fujimori Y."/>
            <person name="Komiyama M."/>
            <person name="Tashiro H."/>
            <person name="Tanigami A."/>
            <person name="Fujiwara T."/>
            <person name="Ono T."/>
            <person name="Yamada K."/>
            <person name="Fujii Y."/>
            <person name="Ozaki K."/>
            <person name="Hirao M."/>
            <person name="Ohmori Y."/>
            <person name="Kawabata A."/>
            <person name="Hikiji T."/>
            <person name="Kobatake N."/>
            <person name="Inagaki H."/>
            <person name="Ikema Y."/>
            <person name="Okamoto S."/>
            <person name="Okitani R."/>
            <person name="Kawakami T."/>
            <person name="Noguchi S."/>
            <person name="Itoh T."/>
            <person name="Shigeta K."/>
            <person name="Senba T."/>
            <person name="Matsumura K."/>
            <person name="Nakajima Y."/>
            <person name="Mizuno T."/>
            <person name="Morinaga M."/>
            <person name="Sasaki M."/>
            <person name="Togashi T."/>
            <person name="Oyama M."/>
            <person name="Hata H."/>
            <person name="Watanabe M."/>
            <person name="Komatsu T."/>
            <person name="Mizushima-Sugano J."/>
            <person name="Satoh T."/>
            <person name="Shirai Y."/>
            <person name="Takahashi Y."/>
            <person name="Nakagawa K."/>
            <person name="Okumura K."/>
            <person name="Nagase T."/>
            <person name="Nomura N."/>
            <person name="Kikuchi H."/>
            <person name="Masuho Y."/>
            <person name="Yamashita R."/>
            <person name="Nakai K."/>
            <person name="Yada T."/>
            <person name="Nakamura Y."/>
            <person name="Ohara O."/>
            <person name="Isogai T."/>
            <person name="Sugano S."/>
        </authorList>
    </citation>
    <scope>NUCLEOTIDE SEQUENCE [LARGE SCALE MRNA]</scope>
</reference>
<reference key="7">
    <citation type="submission" date="2004-06" db="EMBL/GenBank/DDBJ databases">
        <title>Cloning of human full open reading frames in Gateway(TM) system entry vector (pDONR201).</title>
        <authorList>
            <person name="Ebert L."/>
            <person name="Schick M."/>
            <person name="Neubert P."/>
            <person name="Schatten R."/>
            <person name="Henze S."/>
            <person name="Korn B."/>
        </authorList>
    </citation>
    <scope>NUCLEOTIDE SEQUENCE [LARGE SCALE MRNA]</scope>
</reference>
<reference key="8">
    <citation type="submission" date="2005-04" db="EMBL/GenBank/DDBJ databases">
        <authorList>
            <person name="Suzuki Y."/>
            <person name="Sugano S."/>
            <person name="Totoki Y."/>
            <person name="Toyoda A."/>
            <person name="Takeda T."/>
            <person name="Sakaki Y."/>
            <person name="Tanaka A."/>
            <person name="Yokoyama S."/>
        </authorList>
    </citation>
    <scope>NUCLEOTIDE SEQUENCE [LARGE SCALE MRNA]</scope>
    <source>
        <tissue>Liver</tissue>
    </source>
</reference>
<reference key="9">
    <citation type="journal article" date="2001" name="Nature">
        <title>The DNA sequence and comparative analysis of human chromosome 20.</title>
        <authorList>
            <person name="Deloukas P."/>
            <person name="Matthews L.H."/>
            <person name="Ashurst J.L."/>
            <person name="Burton J."/>
            <person name="Gilbert J.G.R."/>
            <person name="Jones M."/>
            <person name="Stavrides G."/>
            <person name="Almeida J.P."/>
            <person name="Babbage A.K."/>
            <person name="Bagguley C.L."/>
            <person name="Bailey J."/>
            <person name="Barlow K.F."/>
            <person name="Bates K.N."/>
            <person name="Beard L.M."/>
            <person name="Beare D.M."/>
            <person name="Beasley O.P."/>
            <person name="Bird C.P."/>
            <person name="Blakey S.E."/>
            <person name="Bridgeman A.M."/>
            <person name="Brown A.J."/>
            <person name="Buck D."/>
            <person name="Burrill W.D."/>
            <person name="Butler A.P."/>
            <person name="Carder C."/>
            <person name="Carter N.P."/>
            <person name="Chapman J.C."/>
            <person name="Clamp M."/>
            <person name="Clark G."/>
            <person name="Clark L.N."/>
            <person name="Clark S.Y."/>
            <person name="Clee C.M."/>
            <person name="Clegg S."/>
            <person name="Cobley V.E."/>
            <person name="Collier R.E."/>
            <person name="Connor R.E."/>
            <person name="Corby N.R."/>
            <person name="Coulson A."/>
            <person name="Coville G.J."/>
            <person name="Deadman R."/>
            <person name="Dhami P.D."/>
            <person name="Dunn M."/>
            <person name="Ellington A.G."/>
            <person name="Frankland J.A."/>
            <person name="Fraser A."/>
            <person name="French L."/>
            <person name="Garner P."/>
            <person name="Grafham D.V."/>
            <person name="Griffiths C."/>
            <person name="Griffiths M.N.D."/>
            <person name="Gwilliam R."/>
            <person name="Hall R.E."/>
            <person name="Hammond S."/>
            <person name="Harley J.L."/>
            <person name="Heath P.D."/>
            <person name="Ho S."/>
            <person name="Holden J.L."/>
            <person name="Howden P.J."/>
            <person name="Huckle E."/>
            <person name="Hunt A.R."/>
            <person name="Hunt S.E."/>
            <person name="Jekosch K."/>
            <person name="Johnson C.M."/>
            <person name="Johnson D."/>
            <person name="Kay M.P."/>
            <person name="Kimberley A.M."/>
            <person name="King A."/>
            <person name="Knights A."/>
            <person name="Laird G.K."/>
            <person name="Lawlor S."/>
            <person name="Lehvaeslaiho M.H."/>
            <person name="Leversha M.A."/>
            <person name="Lloyd C."/>
            <person name="Lloyd D.M."/>
            <person name="Lovell J.D."/>
            <person name="Marsh V.L."/>
            <person name="Martin S.L."/>
            <person name="McConnachie L.J."/>
            <person name="McLay K."/>
            <person name="McMurray A.A."/>
            <person name="Milne S.A."/>
            <person name="Mistry D."/>
            <person name="Moore M.J.F."/>
            <person name="Mullikin J.C."/>
            <person name="Nickerson T."/>
            <person name="Oliver K."/>
            <person name="Parker A."/>
            <person name="Patel R."/>
            <person name="Pearce T.A.V."/>
            <person name="Peck A.I."/>
            <person name="Phillimore B.J.C.T."/>
            <person name="Prathalingam S.R."/>
            <person name="Plumb R.W."/>
            <person name="Ramsay H."/>
            <person name="Rice C.M."/>
            <person name="Ross M.T."/>
            <person name="Scott C.E."/>
            <person name="Sehra H.K."/>
            <person name="Shownkeen R."/>
            <person name="Sims S."/>
            <person name="Skuce C.D."/>
            <person name="Smith M.L."/>
            <person name="Soderlund C."/>
            <person name="Steward C.A."/>
            <person name="Sulston J.E."/>
            <person name="Swann R.M."/>
            <person name="Sycamore N."/>
            <person name="Taylor R."/>
            <person name="Tee L."/>
            <person name="Thomas D.W."/>
            <person name="Thorpe A."/>
            <person name="Tracey A."/>
            <person name="Tromans A.C."/>
            <person name="Vaudin M."/>
            <person name="Wall M."/>
            <person name="Wallis J.M."/>
            <person name="Whitehead S.L."/>
            <person name="Whittaker P."/>
            <person name="Willey D.L."/>
            <person name="Williams L."/>
            <person name="Williams S.A."/>
            <person name="Wilming L."/>
            <person name="Wray P.W."/>
            <person name="Hubbard T."/>
            <person name="Durbin R.M."/>
            <person name="Bentley D.R."/>
            <person name="Beck S."/>
            <person name="Rogers J."/>
        </authorList>
    </citation>
    <scope>NUCLEOTIDE SEQUENCE [LARGE SCALE GENOMIC DNA]</scope>
</reference>
<reference key="10">
    <citation type="journal article" date="2004" name="Genome Res.">
        <title>The status, quality, and expansion of the NIH full-length cDNA project: the Mammalian Gene Collection (MGC).</title>
        <authorList>
            <consortium name="The MGC Project Team"/>
        </authorList>
    </citation>
    <scope>NUCLEOTIDE SEQUENCE [LARGE SCALE MRNA]</scope>
    <scope>VARIANT ARG-84</scope>
    <source>
        <tissue>Cervix</tissue>
        <tissue>Muscle</tissue>
    </source>
</reference>
<reference key="11">
    <citation type="journal article" date="2005" name="EMBO J.">
        <title>TRB3, a novel ER stress-inducible gene, is induced via ATF4-CHOP pathway and is involved in cell death.</title>
        <authorList>
            <person name="Ohoka N."/>
            <person name="Yoshii S."/>
            <person name="Hattori T."/>
            <person name="Onozaki K."/>
            <person name="Hayashi H."/>
        </authorList>
    </citation>
    <scope>FUNCTION</scope>
    <scope>INDUCTION</scope>
    <scope>INTERACTION WITH DDIT3</scope>
</reference>
<reference key="12">
    <citation type="journal article" date="2006" name="Cell. Signal.">
        <title>TRB3 is a PI 3-kinase dependent indicator for nutrient starvation.</title>
        <authorList>
            <person name="Schwarzer R."/>
            <person name="Dames S."/>
            <person name="Tondera D."/>
            <person name="Klippel A."/>
            <person name="Kaufmann J."/>
        </authorList>
    </citation>
    <scope>INDUCTION</scope>
</reference>
<reference key="13">
    <citation type="journal article" date="2007" name="J. Biol. Chem.">
        <title>Critical and functional regulation of CHOP (C/EBP homologous protein) through the N-terminal portion.</title>
        <authorList>
            <person name="Ohoka N."/>
            <person name="Hattori T."/>
            <person name="Kitagawa M."/>
            <person name="Onozaki K."/>
            <person name="Hayashi H."/>
        </authorList>
    </citation>
    <scope>INTERACTION WITH DDIT3</scope>
</reference>
<reference key="14">
    <citation type="journal article" date="2012" name="J. Biol. Chem.">
        <title>Human Tribbles 3 protects nuclear DNA from cytidine deamination by APOBEC3A.</title>
        <authorList>
            <person name="Aynaud M.M."/>
            <person name="Suspene R."/>
            <person name="Vidalain P.O."/>
            <person name="Mussil B."/>
            <person name="Guetard D."/>
            <person name="Tangy F."/>
            <person name="Wain-Hobson S."/>
            <person name="Vartanian J.P."/>
        </authorList>
    </citation>
    <scope>FUNCTION</scope>
    <scope>INTERACTION WITH APOBEC3A AND APOBEC3C</scope>
    <scope>SUBCELLULAR LOCATION</scope>
</reference>
<reference key="15">
    <citation type="journal article" date="2013" name="J. Proteome Res.">
        <title>Toward a comprehensive characterization of a human cancer cell phosphoproteome.</title>
        <authorList>
            <person name="Zhou H."/>
            <person name="Di Palma S."/>
            <person name="Preisinger C."/>
            <person name="Peng M."/>
            <person name="Polat A.N."/>
            <person name="Heck A.J."/>
            <person name="Mohammed S."/>
        </authorList>
    </citation>
    <scope>PHOSPHORYLATION [LARGE SCALE ANALYSIS] AT SER-12</scope>
    <scope>IDENTIFICATION BY MASS SPECTROMETRY [LARGE SCALE ANALYSIS]</scope>
    <source>
        <tissue>Erythroleukemia</tissue>
    </source>
</reference>
<reference key="16">
    <citation type="journal article" date="2007" name="Nature">
        <title>Patterns of somatic mutation in human cancer genomes.</title>
        <authorList>
            <person name="Greenman C."/>
            <person name="Stephens P."/>
            <person name="Smith R."/>
            <person name="Dalgliesh G.L."/>
            <person name="Hunter C."/>
            <person name="Bignell G."/>
            <person name="Davies H."/>
            <person name="Teague J."/>
            <person name="Butler A."/>
            <person name="Stevens C."/>
            <person name="Edkins S."/>
            <person name="O'Meara S."/>
            <person name="Vastrik I."/>
            <person name="Schmidt E.E."/>
            <person name="Avis T."/>
            <person name="Barthorpe S."/>
            <person name="Bhamra G."/>
            <person name="Buck G."/>
            <person name="Choudhury B."/>
            <person name="Clements J."/>
            <person name="Cole J."/>
            <person name="Dicks E."/>
            <person name="Forbes S."/>
            <person name="Gray K."/>
            <person name="Halliday K."/>
            <person name="Harrison R."/>
            <person name="Hills K."/>
            <person name="Hinton J."/>
            <person name="Jenkinson A."/>
            <person name="Jones D."/>
            <person name="Menzies A."/>
            <person name="Mironenko T."/>
            <person name="Perry J."/>
            <person name="Raine K."/>
            <person name="Richardson D."/>
            <person name="Shepherd R."/>
            <person name="Small A."/>
            <person name="Tofts C."/>
            <person name="Varian J."/>
            <person name="Webb T."/>
            <person name="West S."/>
            <person name="Widaa S."/>
            <person name="Yates A."/>
            <person name="Cahill D.P."/>
            <person name="Louis D.N."/>
            <person name="Goldstraw P."/>
            <person name="Nicholson A.G."/>
            <person name="Brasseur F."/>
            <person name="Looijenga L."/>
            <person name="Weber B.L."/>
            <person name="Chiew Y.-E."/>
            <person name="DeFazio A."/>
            <person name="Greaves M.F."/>
            <person name="Green A.R."/>
            <person name="Campbell P."/>
            <person name="Birney E."/>
            <person name="Easton D.F."/>
            <person name="Chenevix-Trench G."/>
            <person name="Tan M.-H."/>
            <person name="Khoo S.K."/>
            <person name="Teh B.T."/>
            <person name="Yuen S.T."/>
            <person name="Leung S.Y."/>
            <person name="Wooster R."/>
            <person name="Futreal P.A."/>
            <person name="Stratton M.R."/>
        </authorList>
    </citation>
    <scope>VARIANTS [LARGE SCALE ANALYSIS] ILE-60; ARG-84; HIS-153; HIS-274 AND LYS-347</scope>
</reference>
<feature type="chain" id="PRO_0000131866" description="Tribbles homolog 3">
    <location>
        <begin position="1"/>
        <end position="358"/>
    </location>
</feature>
<feature type="domain" description="Protein kinase" evidence="2">
    <location>
        <begin position="68"/>
        <end position="316"/>
    </location>
</feature>
<feature type="region of interest" description="Interaction with DDIT3/CHOP">
    <location>
        <begin position="1"/>
        <end position="127"/>
    </location>
</feature>
<feature type="region of interest" description="Disordered" evidence="3">
    <location>
        <begin position="1"/>
        <end position="54"/>
    </location>
</feature>
<feature type="compositionally biased region" description="Pro residues" evidence="3">
    <location>
        <begin position="41"/>
        <end position="54"/>
    </location>
</feature>
<feature type="modified residue" description="Phosphoserine" evidence="15">
    <location>
        <position position="12"/>
    </location>
</feature>
<feature type="sequence variant" id="VAR_042372" description="In a glioblastoma multiforme sample; somatic mutation; dbSNP:rs757496714." evidence="11">
    <original>T</original>
    <variation>I</variation>
    <location>
        <position position="60"/>
    </location>
</feature>
<feature type="sequence variant" id="VAR_023965" description="In dbSNP:rs2295490." evidence="7 11">
    <original>Q</original>
    <variation>R</variation>
    <location>
        <position position="84"/>
    </location>
</feature>
<feature type="sequence variant" id="VAR_042373" description="In dbSNP:rs35051116." evidence="11">
    <original>R</original>
    <variation>H</variation>
    <location>
        <position position="153"/>
    </location>
</feature>
<feature type="sequence variant" id="VAR_042374" description="In dbSNP:rs56291463." evidence="11">
    <original>R</original>
    <variation>H</variation>
    <location>
        <position position="274"/>
    </location>
</feature>
<feature type="sequence variant" id="VAR_042375" description="In dbSNP:rs56342286." evidence="11">
    <original>E</original>
    <variation>K</variation>
    <location>
        <position position="347"/>
    </location>
</feature>
<feature type="sequence conflict" description="In Ref. 7; CAG33647." evidence="14" ref="7">
    <original>N</original>
    <variation>D</variation>
    <location>
        <position position="24"/>
    </location>
</feature>
<feature type="sequence conflict" description="In Ref. 6; BAB15597 and 8; BAD96557." evidence="14" ref="6 8">
    <original>L</original>
    <variation>P</variation>
    <location>
        <position position="105"/>
    </location>
</feature>
<feature type="sequence conflict" description="In Ref. 3; AAK58175." evidence="14" ref="3">
    <original>L</original>
    <variation>V</variation>
    <location>
        <position position="114"/>
    </location>
</feature>
<feature type="sequence conflict" description="In Ref. 3; AAK58175." evidence="14" ref="3">
    <original>ER</original>
    <variation>DREK</variation>
    <location>
        <begin position="194"/>
        <end position="195"/>
    </location>
</feature>
<sequence>MRATPLAAPAGSLSRKKRLELDDNLDTERPVQKRARSGPQPRLPPCLLPLSPPTAPDRATAVATASRLGPYVLLEPEEGGRAYQALHCPTGTEYTCKVYPVQEALAVLEPYARLPPHKHVARPTEVLAGTQLLYAFFTRTHGDMHSLVRSRHRIPEPEAAVLFRQMATALAHCHQHGLVLRDLKLCRFVFADRERKKLVLENLEDSCVLTGPDDSLWDKHACPAYVGPEILSSRASYSGKAADVWSLGVALFTMLAGHYPFQDSEPVLLFGKIRRGAYALPAGLSAPARCLVRCLLRREPAERLTATGILLHPWLRQDPMPLAPTRSHLWEAAQVVPDGLGLDEAREEEGDREVVLYG</sequence>
<dbReference type="EMBL" id="AF250311">
    <property type="protein sequence ID" value="AAK58175.1"/>
    <property type="molecule type" value="mRNA"/>
</dbReference>
<dbReference type="EMBL" id="AJ697936">
    <property type="protein sequence ID" value="CAG27047.1"/>
    <property type="molecule type" value="mRNA"/>
</dbReference>
<dbReference type="EMBL" id="AY247738">
    <property type="protein sequence ID" value="AAP04407.1"/>
    <property type="molecule type" value="mRNA"/>
</dbReference>
<dbReference type="EMBL" id="AK026945">
    <property type="protein sequence ID" value="BAB15597.1"/>
    <property type="molecule type" value="mRNA"/>
</dbReference>
<dbReference type="EMBL" id="CR457366">
    <property type="protein sequence ID" value="CAG33647.1"/>
    <property type="molecule type" value="mRNA"/>
</dbReference>
<dbReference type="EMBL" id="AK222837">
    <property type="protein sequence ID" value="BAD96557.1"/>
    <property type="molecule type" value="mRNA"/>
</dbReference>
<dbReference type="EMBL" id="AL034548">
    <property type="status" value="NOT_ANNOTATED_CDS"/>
    <property type="molecule type" value="Genomic_DNA"/>
</dbReference>
<dbReference type="EMBL" id="BC019363">
    <property type="protein sequence ID" value="AAH19363.1"/>
    <property type="molecule type" value="mRNA"/>
</dbReference>
<dbReference type="EMBL" id="BC027484">
    <property type="protein sequence ID" value="AAH27484.1"/>
    <property type="molecule type" value="mRNA"/>
</dbReference>
<dbReference type="CCDS" id="CCDS12997.1"/>
<dbReference type="RefSeq" id="NP_001288117.1">
    <property type="nucleotide sequence ID" value="NM_001301188.1"/>
</dbReference>
<dbReference type="RefSeq" id="NP_001288119.1">
    <property type="nucleotide sequence ID" value="NM_001301190.1"/>
</dbReference>
<dbReference type="RefSeq" id="NP_001288122.1">
    <property type="nucleotide sequence ID" value="NM_001301193.1"/>
</dbReference>
<dbReference type="RefSeq" id="NP_001288125.1">
    <property type="nucleotide sequence ID" value="NM_001301196.1"/>
</dbReference>
<dbReference type="RefSeq" id="NP_001288130.1">
    <property type="nucleotide sequence ID" value="NM_001301201.1"/>
</dbReference>
<dbReference type="RefSeq" id="NP_066981.2">
    <property type="nucleotide sequence ID" value="NM_021158.4"/>
</dbReference>
<dbReference type="SMR" id="Q96RU7"/>
<dbReference type="BioGRID" id="121756">
    <property type="interactions" value="158"/>
</dbReference>
<dbReference type="CORUM" id="Q96RU7"/>
<dbReference type="FunCoup" id="Q96RU7">
    <property type="interactions" value="1371"/>
</dbReference>
<dbReference type="IntAct" id="Q96RU7">
    <property type="interactions" value="104"/>
</dbReference>
<dbReference type="MINT" id="Q96RU7"/>
<dbReference type="STRING" id="9606.ENSP00000415416"/>
<dbReference type="GlyGen" id="Q96RU7">
    <property type="glycosylation" value="1 site, 1 O-linked glycan (1 site)"/>
</dbReference>
<dbReference type="iPTMnet" id="Q96RU7"/>
<dbReference type="PhosphoSitePlus" id="Q96RU7"/>
<dbReference type="BioMuta" id="TRIB3"/>
<dbReference type="DMDM" id="28201830"/>
<dbReference type="jPOST" id="Q96RU7"/>
<dbReference type="MassIVE" id="Q96RU7"/>
<dbReference type="PaxDb" id="9606-ENSP00000217233"/>
<dbReference type="PeptideAtlas" id="Q96RU7"/>
<dbReference type="ProteomicsDB" id="78040"/>
<dbReference type="Pumba" id="Q96RU7"/>
<dbReference type="Antibodypedia" id="6154">
    <property type="antibodies" value="596 antibodies from 34 providers"/>
</dbReference>
<dbReference type="DNASU" id="57761"/>
<dbReference type="Ensembl" id="ENST00000217233.9">
    <property type="protein sequence ID" value="ENSP00000217233.3"/>
    <property type="gene ID" value="ENSG00000101255.13"/>
</dbReference>
<dbReference type="Ensembl" id="ENST00000449710.6">
    <property type="protein sequence ID" value="ENSP00000391873.2"/>
    <property type="gene ID" value="ENSG00000101255.13"/>
</dbReference>
<dbReference type="Ensembl" id="ENST00000615226.5">
    <property type="protein sequence ID" value="ENSP00000478194.2"/>
    <property type="gene ID" value="ENSG00000101255.13"/>
</dbReference>
<dbReference type="Ensembl" id="ENST00000714424.1">
    <property type="protein sequence ID" value="ENSP00000519693.1"/>
    <property type="gene ID" value="ENSG00000101255.13"/>
</dbReference>
<dbReference type="Ensembl" id="ENST00000714425.1">
    <property type="protein sequence ID" value="ENSP00000519694.1"/>
    <property type="gene ID" value="ENSG00000101255.13"/>
</dbReference>
<dbReference type="Ensembl" id="ENST00000714427.1">
    <property type="protein sequence ID" value="ENSP00000519696.1"/>
    <property type="gene ID" value="ENSG00000101255.13"/>
</dbReference>
<dbReference type="Ensembl" id="ENST00000714428.1">
    <property type="protein sequence ID" value="ENSP00000519697.1"/>
    <property type="gene ID" value="ENSG00000101255.13"/>
</dbReference>
<dbReference type="GeneID" id="57761"/>
<dbReference type="KEGG" id="hsa:57761"/>
<dbReference type="MANE-Select" id="ENST00000217233.9">
    <property type="protein sequence ID" value="ENSP00000217233.3"/>
    <property type="RefSeq nucleotide sequence ID" value="NM_021158.5"/>
    <property type="RefSeq protein sequence ID" value="NP_066981.2"/>
</dbReference>
<dbReference type="UCSC" id="uc002wdm.4">
    <property type="organism name" value="human"/>
</dbReference>
<dbReference type="AGR" id="HGNC:16228"/>
<dbReference type="CTD" id="57761"/>
<dbReference type="DisGeNET" id="57761"/>
<dbReference type="GeneCards" id="TRIB3"/>
<dbReference type="HGNC" id="HGNC:16228">
    <property type="gene designation" value="TRIB3"/>
</dbReference>
<dbReference type="HPA" id="ENSG00000101255">
    <property type="expression patterns" value="Tissue enhanced (liver)"/>
</dbReference>
<dbReference type="MIM" id="607898">
    <property type="type" value="gene"/>
</dbReference>
<dbReference type="neXtProt" id="NX_Q96RU7"/>
<dbReference type="OpenTargets" id="ENSG00000101255"/>
<dbReference type="PharmGKB" id="PA25804"/>
<dbReference type="VEuPathDB" id="HostDB:ENSG00000101255"/>
<dbReference type="eggNOG" id="KOG0583">
    <property type="taxonomic scope" value="Eukaryota"/>
</dbReference>
<dbReference type="GeneTree" id="ENSGT00950000182986"/>
<dbReference type="InParanoid" id="Q96RU7"/>
<dbReference type="OrthoDB" id="410920at2759"/>
<dbReference type="PAN-GO" id="Q96RU7">
    <property type="GO annotations" value="4 GO annotations based on evolutionary models"/>
</dbReference>
<dbReference type="PhylomeDB" id="Q96RU7"/>
<dbReference type="TreeFam" id="TF329785"/>
<dbReference type="PathwayCommons" id="Q96RU7"/>
<dbReference type="Reactome" id="R-HSA-1257604">
    <property type="pathway name" value="PIP3 activates AKT signaling"/>
</dbReference>
<dbReference type="Reactome" id="R-HSA-165158">
    <property type="pathway name" value="Activation of AKT2"/>
</dbReference>
<dbReference type="Reactome" id="R-HSA-1989781">
    <property type="pathway name" value="PPARA activates gene expression"/>
</dbReference>
<dbReference type="Reactome" id="R-HSA-199418">
    <property type="pathway name" value="Negative regulation of the PI3K/AKT network"/>
</dbReference>
<dbReference type="Reactome" id="R-HSA-389357">
    <property type="pathway name" value="CD28 dependent PI3K/Akt signaling"/>
</dbReference>
<dbReference type="Reactome" id="R-HSA-5218920">
    <property type="pathway name" value="VEGFR2 mediated vascular permeability"/>
</dbReference>
<dbReference type="Reactome" id="R-HSA-9633012">
    <property type="pathway name" value="Response of EIF2AK4 (GCN2) to amino acid deficiency"/>
</dbReference>
<dbReference type="Reactome" id="R-HSA-9648895">
    <property type="pathway name" value="Response of EIF2AK1 (HRI) to heme deficiency"/>
</dbReference>
<dbReference type="SignaLink" id="Q96RU7"/>
<dbReference type="SIGNOR" id="Q96RU7"/>
<dbReference type="BioGRID-ORCS" id="57761">
    <property type="hits" value="11 hits in 1190 CRISPR screens"/>
</dbReference>
<dbReference type="CD-CODE" id="B5B9A610">
    <property type="entry name" value="PML body"/>
</dbReference>
<dbReference type="ChiTaRS" id="TRIB3">
    <property type="organism name" value="human"/>
</dbReference>
<dbReference type="GeneWiki" id="TRIB3"/>
<dbReference type="GenomeRNAi" id="57761"/>
<dbReference type="Pharos" id="Q96RU7">
    <property type="development level" value="Tbio"/>
</dbReference>
<dbReference type="PRO" id="PR:Q96RU7"/>
<dbReference type="Proteomes" id="UP000005640">
    <property type="component" value="Chromosome 20"/>
</dbReference>
<dbReference type="RNAct" id="Q96RU7">
    <property type="molecule type" value="protein"/>
</dbReference>
<dbReference type="Bgee" id="ENSG00000101255">
    <property type="expression patterns" value="Expressed in right lobe of liver and 129 other cell types or tissues"/>
</dbReference>
<dbReference type="ExpressionAtlas" id="Q96RU7">
    <property type="expression patterns" value="baseline and differential"/>
</dbReference>
<dbReference type="GO" id="GO:0005829">
    <property type="term" value="C:cytosol"/>
    <property type="evidence" value="ECO:0000304"/>
    <property type="project" value="Reactome"/>
</dbReference>
<dbReference type="GO" id="GO:0005654">
    <property type="term" value="C:nucleoplasm"/>
    <property type="evidence" value="ECO:0000314"/>
    <property type="project" value="HPA"/>
</dbReference>
<dbReference type="GO" id="GO:0005634">
    <property type="term" value="C:nucleus"/>
    <property type="evidence" value="ECO:0000250"/>
    <property type="project" value="UniProtKB"/>
</dbReference>
<dbReference type="GO" id="GO:0005886">
    <property type="term" value="C:plasma membrane"/>
    <property type="evidence" value="ECO:0000304"/>
    <property type="project" value="Reactome"/>
</dbReference>
<dbReference type="GO" id="GO:0005524">
    <property type="term" value="F:ATP binding"/>
    <property type="evidence" value="ECO:0007669"/>
    <property type="project" value="InterPro"/>
</dbReference>
<dbReference type="GO" id="GO:0031434">
    <property type="term" value="F:mitogen-activated protein kinase kinase binding"/>
    <property type="evidence" value="ECO:0000318"/>
    <property type="project" value="GO_Central"/>
</dbReference>
<dbReference type="GO" id="GO:0019901">
    <property type="term" value="F:protein kinase binding"/>
    <property type="evidence" value="ECO:0000353"/>
    <property type="project" value="UniProtKB"/>
</dbReference>
<dbReference type="GO" id="GO:0004860">
    <property type="term" value="F:protein kinase inhibitor activity"/>
    <property type="evidence" value="ECO:0000314"/>
    <property type="project" value="BHF-UCL"/>
</dbReference>
<dbReference type="GO" id="GO:0030291">
    <property type="term" value="F:protein serine/threonine kinase inhibitor activity"/>
    <property type="evidence" value="ECO:0000314"/>
    <property type="project" value="BHF-UCL"/>
</dbReference>
<dbReference type="GO" id="GO:0003714">
    <property type="term" value="F:transcription corepressor activity"/>
    <property type="evidence" value="ECO:0000250"/>
    <property type="project" value="UniProtKB"/>
</dbReference>
<dbReference type="GO" id="GO:1990757">
    <property type="term" value="F:ubiquitin ligase activator activity"/>
    <property type="evidence" value="ECO:0000250"/>
    <property type="project" value="BHF-UCL"/>
</dbReference>
<dbReference type="GO" id="GO:0031625">
    <property type="term" value="F:ubiquitin protein ligase binding"/>
    <property type="evidence" value="ECO:0000250"/>
    <property type="project" value="BHF-UCL"/>
</dbReference>
<dbReference type="GO" id="GO:0055106">
    <property type="term" value="F:ubiquitin-protein transferase regulator activity"/>
    <property type="evidence" value="ECO:0000250"/>
    <property type="project" value="BHF-UCL"/>
</dbReference>
<dbReference type="GO" id="GO:0032869">
    <property type="term" value="P:cellular response to insulin stimulus"/>
    <property type="evidence" value="ECO:0000250"/>
    <property type="project" value="BHF-UCL"/>
</dbReference>
<dbReference type="GO" id="GO:0070059">
    <property type="term" value="P:intrinsic apoptotic signaling pathway in response to endoplasmic reticulum stress"/>
    <property type="evidence" value="ECO:0000314"/>
    <property type="project" value="UniProtKB"/>
</dbReference>
<dbReference type="GO" id="GO:0045892">
    <property type="term" value="P:negative regulation of DNA-templated transcription"/>
    <property type="evidence" value="ECO:0000315"/>
    <property type="project" value="UniProtKB"/>
</dbReference>
<dbReference type="GO" id="GO:0045599">
    <property type="term" value="P:negative regulation of fat cell differentiation"/>
    <property type="evidence" value="ECO:0000250"/>
    <property type="project" value="BHF-UCL"/>
</dbReference>
<dbReference type="GO" id="GO:0045717">
    <property type="term" value="P:negative regulation of fatty acid biosynthetic process"/>
    <property type="evidence" value="ECO:0000250"/>
    <property type="project" value="BHF-UCL"/>
</dbReference>
<dbReference type="GO" id="GO:0046627">
    <property type="term" value="P:negative regulation of insulin receptor signaling pathway"/>
    <property type="evidence" value="ECO:0000314"/>
    <property type="project" value="BHF-UCL"/>
</dbReference>
<dbReference type="GO" id="GO:0043409">
    <property type="term" value="P:negative regulation of MAPK cascade"/>
    <property type="evidence" value="ECO:0000315"/>
    <property type="project" value="BHF-UCL"/>
</dbReference>
<dbReference type="GO" id="GO:0000122">
    <property type="term" value="P:negative regulation of transcription by RNA polymerase II"/>
    <property type="evidence" value="ECO:0000314"/>
    <property type="project" value="ParkinsonsUK-UCL"/>
</dbReference>
<dbReference type="GO" id="GO:0032436">
    <property type="term" value="P:positive regulation of proteasomal ubiquitin-dependent protein catabolic process"/>
    <property type="evidence" value="ECO:0000318"/>
    <property type="project" value="GO_Central"/>
</dbReference>
<dbReference type="GO" id="GO:0031398">
    <property type="term" value="P:positive regulation of protein ubiquitination"/>
    <property type="evidence" value="ECO:0000250"/>
    <property type="project" value="BHF-UCL"/>
</dbReference>
<dbReference type="GO" id="GO:0010506">
    <property type="term" value="P:regulation of autophagy"/>
    <property type="evidence" value="ECO:0000250"/>
    <property type="project" value="UniProtKB"/>
</dbReference>
<dbReference type="GO" id="GO:0010827">
    <property type="term" value="P:regulation of D-glucose transmembrane transport"/>
    <property type="evidence" value="ECO:0000250"/>
    <property type="project" value="BHF-UCL"/>
</dbReference>
<dbReference type="GO" id="GO:0043405">
    <property type="term" value="P:regulation of MAP kinase activity"/>
    <property type="evidence" value="ECO:0000314"/>
    <property type="project" value="UniProtKB"/>
</dbReference>
<dbReference type="GO" id="GO:0034976">
    <property type="term" value="P:response to endoplasmic reticulum stress"/>
    <property type="evidence" value="ECO:0000314"/>
    <property type="project" value="UniProtKB"/>
</dbReference>
<dbReference type="CDD" id="cd14024">
    <property type="entry name" value="PK_TRB3"/>
    <property type="match status" value="1"/>
</dbReference>
<dbReference type="FunFam" id="1.10.510.10:FF:000153">
    <property type="entry name" value="Tribbles homolog 2"/>
    <property type="match status" value="1"/>
</dbReference>
<dbReference type="FunFam" id="3.30.200.20:FF:000439">
    <property type="entry name" value="Tribbles pseudokinase 3"/>
    <property type="match status" value="1"/>
</dbReference>
<dbReference type="Gene3D" id="3.30.200.20">
    <property type="entry name" value="Phosphorylase Kinase, domain 1"/>
    <property type="match status" value="1"/>
</dbReference>
<dbReference type="Gene3D" id="1.10.510.10">
    <property type="entry name" value="Transferase(Phosphotransferase) domain 1"/>
    <property type="match status" value="1"/>
</dbReference>
<dbReference type="InterPro" id="IPR011009">
    <property type="entry name" value="Kinase-like_dom_sf"/>
</dbReference>
<dbReference type="InterPro" id="IPR000719">
    <property type="entry name" value="Prot_kinase_dom"/>
</dbReference>
<dbReference type="InterPro" id="IPR024104">
    <property type="entry name" value="Tribbles/Ser_Thr_kinase_40"/>
</dbReference>
<dbReference type="PANTHER" id="PTHR22961">
    <property type="entry name" value="SER/THR PROTEIN KINASE-TRB"/>
    <property type="match status" value="1"/>
</dbReference>
<dbReference type="PANTHER" id="PTHR22961:SF14">
    <property type="entry name" value="TRIBBLES HOMOLOG 3"/>
    <property type="match status" value="1"/>
</dbReference>
<dbReference type="Pfam" id="PF00069">
    <property type="entry name" value="Pkinase"/>
    <property type="match status" value="1"/>
</dbReference>
<dbReference type="SMART" id="SM00220">
    <property type="entry name" value="S_TKc"/>
    <property type="match status" value="1"/>
</dbReference>
<dbReference type="SUPFAM" id="SSF56112">
    <property type="entry name" value="Protein kinase-like (PK-like)"/>
    <property type="match status" value="1"/>
</dbReference>
<dbReference type="PROSITE" id="PS50011">
    <property type="entry name" value="PROTEIN_KINASE_DOM"/>
    <property type="match status" value="1"/>
</dbReference>
<evidence type="ECO:0000250" key="1">
    <source>
        <dbReference type="UniProtKB" id="Q8K4K2"/>
    </source>
</evidence>
<evidence type="ECO:0000255" key="2">
    <source>
        <dbReference type="PROSITE-ProRule" id="PRU00159"/>
    </source>
</evidence>
<evidence type="ECO:0000256" key="3">
    <source>
        <dbReference type="SAM" id="MobiDB-lite"/>
    </source>
</evidence>
<evidence type="ECO:0000269" key="4">
    <source>
    </source>
</evidence>
<evidence type="ECO:0000269" key="5">
    <source>
    </source>
</evidence>
<evidence type="ECO:0000269" key="6">
    <source>
    </source>
</evidence>
<evidence type="ECO:0000269" key="7">
    <source>
    </source>
</evidence>
<evidence type="ECO:0000269" key="8">
    <source>
    </source>
</evidence>
<evidence type="ECO:0000269" key="9">
    <source>
    </source>
</evidence>
<evidence type="ECO:0000269" key="10">
    <source>
    </source>
</evidence>
<evidence type="ECO:0000269" key="11">
    <source>
    </source>
</evidence>
<evidence type="ECO:0000269" key="12">
    <source>
    </source>
</evidence>
<evidence type="ECO:0000269" key="13">
    <source>
    </source>
</evidence>
<evidence type="ECO:0000305" key="14"/>
<evidence type="ECO:0007744" key="15">
    <source>
    </source>
</evidence>
<proteinExistence type="evidence at protein level"/>
<accession>Q96RU7</accession>
<accession>Q53GU4</accession>
<accession>Q53ZW7</accession>
<accession>Q6I9Y9</accession>
<accession>Q8TAI6</accession>
<accession>Q9H5M8</accession>
<accession>Q9NUD2</accession>
<protein>
    <recommendedName>
        <fullName>Tribbles homolog 3</fullName>
        <shortName>TRB-3</shortName>
    </recommendedName>
    <alternativeName>
        <fullName>Neuronal cell death-inducible putative kinase</fullName>
    </alternativeName>
    <alternativeName>
        <fullName>SINK</fullName>
    </alternativeName>
    <alternativeName>
        <fullName>p65-interacting inhibitor of NF-kappa-B</fullName>
    </alternativeName>
</protein>
<keyword id="KW-0053">Apoptosis</keyword>
<keyword id="KW-0539">Nucleus</keyword>
<keyword id="KW-0597">Phosphoprotein</keyword>
<keyword id="KW-0649">Protein kinase inhibitor</keyword>
<keyword id="KW-1267">Proteomics identification</keyword>
<keyword id="KW-1185">Reference proteome</keyword>
<keyword id="KW-0346">Stress response</keyword>
<keyword id="KW-0804">Transcription</keyword>
<keyword id="KW-0805">Transcription regulation</keyword>
<name>TRIB3_HUMAN</name>
<gene>
    <name type="primary">TRIB3</name>
    <name type="synonym">C20orf97</name>
    <name type="synonym">NIPK</name>
    <name type="synonym">SKIP3</name>
    <name type="synonym">TRB3</name>
</gene>
<organism>
    <name type="scientific">Homo sapiens</name>
    <name type="common">Human</name>
    <dbReference type="NCBI Taxonomy" id="9606"/>
    <lineage>
        <taxon>Eukaryota</taxon>
        <taxon>Metazoa</taxon>
        <taxon>Chordata</taxon>
        <taxon>Craniata</taxon>
        <taxon>Vertebrata</taxon>
        <taxon>Euteleostomi</taxon>
        <taxon>Mammalia</taxon>
        <taxon>Eutheria</taxon>
        <taxon>Euarchontoglires</taxon>
        <taxon>Primates</taxon>
        <taxon>Haplorrhini</taxon>
        <taxon>Catarrhini</taxon>
        <taxon>Hominidae</taxon>
        <taxon>Homo</taxon>
    </lineage>
</organism>